<protein>
    <recommendedName>
        <fullName evidence="1">Adenylosuccinate synthetase</fullName>
        <shortName evidence="1">AMPSase</shortName>
        <shortName evidence="1">AdSS</shortName>
        <ecNumber evidence="1">6.3.4.4</ecNumber>
    </recommendedName>
    <alternativeName>
        <fullName evidence="1">IMP--aspartate ligase</fullName>
    </alternativeName>
</protein>
<evidence type="ECO:0000255" key="1">
    <source>
        <dbReference type="HAMAP-Rule" id="MF_00011"/>
    </source>
</evidence>
<organism>
    <name type="scientific">Streptococcus thermophilus (strain CNRZ 1066)</name>
    <dbReference type="NCBI Taxonomy" id="299768"/>
    <lineage>
        <taxon>Bacteria</taxon>
        <taxon>Bacillati</taxon>
        <taxon>Bacillota</taxon>
        <taxon>Bacilli</taxon>
        <taxon>Lactobacillales</taxon>
        <taxon>Streptococcaceae</taxon>
        <taxon>Streptococcus</taxon>
    </lineage>
</organism>
<accession>Q5LXQ5</accession>
<name>PURA_STRT1</name>
<reference key="1">
    <citation type="journal article" date="2004" name="Nat. Biotechnol.">
        <title>Complete sequence and comparative genome analysis of the dairy bacterium Streptococcus thermophilus.</title>
        <authorList>
            <person name="Bolotin A."/>
            <person name="Quinquis B."/>
            <person name="Renault P."/>
            <person name="Sorokin A."/>
            <person name="Ehrlich S.D."/>
            <person name="Kulakauskas S."/>
            <person name="Lapidus A."/>
            <person name="Goltsman E."/>
            <person name="Mazur M."/>
            <person name="Pusch G.D."/>
            <person name="Fonstein M."/>
            <person name="Overbeek R."/>
            <person name="Kyprides N."/>
            <person name="Purnelle B."/>
            <person name="Prozzi D."/>
            <person name="Ngui K."/>
            <person name="Masuy D."/>
            <person name="Hancy F."/>
            <person name="Burteau S."/>
            <person name="Boutry M."/>
            <person name="Delcour J."/>
            <person name="Goffeau A."/>
            <person name="Hols P."/>
        </authorList>
    </citation>
    <scope>NUCLEOTIDE SEQUENCE [LARGE SCALE GENOMIC DNA]</scope>
    <source>
        <strain>CNRZ 1066</strain>
    </source>
</reference>
<gene>
    <name evidence="1" type="primary">purA</name>
    <name type="ordered locus">str1940</name>
</gene>
<keyword id="KW-0963">Cytoplasm</keyword>
<keyword id="KW-0342">GTP-binding</keyword>
<keyword id="KW-0436">Ligase</keyword>
<keyword id="KW-0460">Magnesium</keyword>
<keyword id="KW-0479">Metal-binding</keyword>
<keyword id="KW-0547">Nucleotide-binding</keyword>
<keyword id="KW-0658">Purine biosynthesis</keyword>
<sequence length="430" mass="47567">MTSVVVIGTQWGDEGKGKITDFLSQDAEVIARYQGGDNAGHTIVIDGKKFKLHLIPSGVFFPEKISVIGNGVVVNPKSLVKELEYLHTEGVSTENLRISDRAHVILPYHIKLDQLQEAAKGDNKIGTTNKGIGPAYMDKAARVGIRIADLLDKEIFASRLKTNLAEKNRLFSKMYESEELSFDEIFEEYYAYGQQIKQYVTDTSVILNDALDAGKRVLFEGAQGVMLDIDQGTYPFVTSSNPVAGGVTIGSGIGPSKINKVVGVCKAYTSRVGDGPFPTELFDEVGERIREVGHEYGTTTGRPRRVGWFDSVVMRHSRRVSGITNLSLNCIDVLSGLDTVKICVAYDLDGERIDYYPASLEQLKRCKPIYEELPGWEEDITGCRSLDELPENARNYVRRIGELVGIRISTFSVGPGREQTNILESVWSNI</sequence>
<dbReference type="EC" id="6.3.4.4" evidence="1"/>
<dbReference type="EMBL" id="CP000024">
    <property type="protein sequence ID" value="AAV63453.1"/>
    <property type="molecule type" value="Genomic_DNA"/>
</dbReference>
<dbReference type="RefSeq" id="WP_002948622.1">
    <property type="nucleotide sequence ID" value="NC_006449.1"/>
</dbReference>
<dbReference type="SMR" id="Q5LXQ5"/>
<dbReference type="KEGG" id="stc:str1940"/>
<dbReference type="HOGENOM" id="CLU_029848_0_0_9"/>
<dbReference type="UniPathway" id="UPA00075">
    <property type="reaction ID" value="UER00335"/>
</dbReference>
<dbReference type="GO" id="GO:0005737">
    <property type="term" value="C:cytoplasm"/>
    <property type="evidence" value="ECO:0007669"/>
    <property type="project" value="UniProtKB-SubCell"/>
</dbReference>
<dbReference type="GO" id="GO:0004019">
    <property type="term" value="F:adenylosuccinate synthase activity"/>
    <property type="evidence" value="ECO:0007669"/>
    <property type="project" value="UniProtKB-UniRule"/>
</dbReference>
<dbReference type="GO" id="GO:0005525">
    <property type="term" value="F:GTP binding"/>
    <property type="evidence" value="ECO:0007669"/>
    <property type="project" value="UniProtKB-UniRule"/>
</dbReference>
<dbReference type="GO" id="GO:0000287">
    <property type="term" value="F:magnesium ion binding"/>
    <property type="evidence" value="ECO:0007669"/>
    <property type="project" value="UniProtKB-UniRule"/>
</dbReference>
<dbReference type="GO" id="GO:0044208">
    <property type="term" value="P:'de novo' AMP biosynthetic process"/>
    <property type="evidence" value="ECO:0007669"/>
    <property type="project" value="UniProtKB-UniRule"/>
</dbReference>
<dbReference type="GO" id="GO:0046040">
    <property type="term" value="P:IMP metabolic process"/>
    <property type="evidence" value="ECO:0007669"/>
    <property type="project" value="TreeGrafter"/>
</dbReference>
<dbReference type="CDD" id="cd03108">
    <property type="entry name" value="AdSS"/>
    <property type="match status" value="1"/>
</dbReference>
<dbReference type="FunFam" id="1.10.300.10:FF:000001">
    <property type="entry name" value="Adenylosuccinate synthetase"/>
    <property type="match status" value="1"/>
</dbReference>
<dbReference type="FunFam" id="3.90.170.10:FF:000001">
    <property type="entry name" value="Adenylosuccinate synthetase"/>
    <property type="match status" value="1"/>
</dbReference>
<dbReference type="Gene3D" id="3.40.440.10">
    <property type="entry name" value="Adenylosuccinate Synthetase, subunit A, domain 1"/>
    <property type="match status" value="1"/>
</dbReference>
<dbReference type="Gene3D" id="1.10.300.10">
    <property type="entry name" value="Adenylosuccinate Synthetase, subunit A, domain 2"/>
    <property type="match status" value="1"/>
</dbReference>
<dbReference type="Gene3D" id="3.90.170.10">
    <property type="entry name" value="Adenylosuccinate Synthetase, subunit A, domain 3"/>
    <property type="match status" value="1"/>
</dbReference>
<dbReference type="HAMAP" id="MF_00011">
    <property type="entry name" value="Adenylosucc_synth"/>
    <property type="match status" value="1"/>
</dbReference>
<dbReference type="InterPro" id="IPR018220">
    <property type="entry name" value="Adenylosuccin_syn_GTP-bd"/>
</dbReference>
<dbReference type="InterPro" id="IPR033128">
    <property type="entry name" value="Adenylosuccin_syn_Lys_AS"/>
</dbReference>
<dbReference type="InterPro" id="IPR042109">
    <property type="entry name" value="Adenylosuccinate_synth_dom1"/>
</dbReference>
<dbReference type="InterPro" id="IPR042110">
    <property type="entry name" value="Adenylosuccinate_synth_dom2"/>
</dbReference>
<dbReference type="InterPro" id="IPR042111">
    <property type="entry name" value="Adenylosuccinate_synth_dom3"/>
</dbReference>
<dbReference type="InterPro" id="IPR001114">
    <property type="entry name" value="Adenylosuccinate_synthetase"/>
</dbReference>
<dbReference type="InterPro" id="IPR027417">
    <property type="entry name" value="P-loop_NTPase"/>
</dbReference>
<dbReference type="NCBIfam" id="NF002223">
    <property type="entry name" value="PRK01117.1"/>
    <property type="match status" value="1"/>
</dbReference>
<dbReference type="NCBIfam" id="TIGR00184">
    <property type="entry name" value="purA"/>
    <property type="match status" value="1"/>
</dbReference>
<dbReference type="PANTHER" id="PTHR11846">
    <property type="entry name" value="ADENYLOSUCCINATE SYNTHETASE"/>
    <property type="match status" value="1"/>
</dbReference>
<dbReference type="PANTHER" id="PTHR11846:SF0">
    <property type="entry name" value="ADENYLOSUCCINATE SYNTHETASE"/>
    <property type="match status" value="1"/>
</dbReference>
<dbReference type="Pfam" id="PF00709">
    <property type="entry name" value="Adenylsucc_synt"/>
    <property type="match status" value="1"/>
</dbReference>
<dbReference type="SMART" id="SM00788">
    <property type="entry name" value="Adenylsucc_synt"/>
    <property type="match status" value="1"/>
</dbReference>
<dbReference type="SUPFAM" id="SSF52540">
    <property type="entry name" value="P-loop containing nucleoside triphosphate hydrolases"/>
    <property type="match status" value="1"/>
</dbReference>
<dbReference type="PROSITE" id="PS01266">
    <property type="entry name" value="ADENYLOSUCCIN_SYN_1"/>
    <property type="match status" value="1"/>
</dbReference>
<dbReference type="PROSITE" id="PS00513">
    <property type="entry name" value="ADENYLOSUCCIN_SYN_2"/>
    <property type="match status" value="1"/>
</dbReference>
<comment type="function">
    <text evidence="1">Plays an important role in the de novo pathway of purine nucleotide biosynthesis. Catalyzes the first committed step in the biosynthesis of AMP from IMP.</text>
</comment>
<comment type="catalytic activity">
    <reaction evidence="1">
        <text>IMP + L-aspartate + GTP = N(6)-(1,2-dicarboxyethyl)-AMP + GDP + phosphate + 2 H(+)</text>
        <dbReference type="Rhea" id="RHEA:15753"/>
        <dbReference type="ChEBI" id="CHEBI:15378"/>
        <dbReference type="ChEBI" id="CHEBI:29991"/>
        <dbReference type="ChEBI" id="CHEBI:37565"/>
        <dbReference type="ChEBI" id="CHEBI:43474"/>
        <dbReference type="ChEBI" id="CHEBI:57567"/>
        <dbReference type="ChEBI" id="CHEBI:58053"/>
        <dbReference type="ChEBI" id="CHEBI:58189"/>
        <dbReference type="EC" id="6.3.4.4"/>
    </reaction>
</comment>
<comment type="cofactor">
    <cofactor evidence="1">
        <name>Mg(2+)</name>
        <dbReference type="ChEBI" id="CHEBI:18420"/>
    </cofactor>
    <text evidence="1">Binds 1 Mg(2+) ion per subunit.</text>
</comment>
<comment type="pathway">
    <text evidence="1">Purine metabolism; AMP biosynthesis via de novo pathway; AMP from IMP: step 1/2.</text>
</comment>
<comment type="subunit">
    <text evidence="1">Homodimer.</text>
</comment>
<comment type="subcellular location">
    <subcellularLocation>
        <location evidence="1">Cytoplasm</location>
    </subcellularLocation>
</comment>
<comment type="similarity">
    <text evidence="1">Belongs to the adenylosuccinate synthetase family.</text>
</comment>
<proteinExistence type="inferred from homology"/>
<feature type="chain" id="PRO_0000224327" description="Adenylosuccinate synthetase">
    <location>
        <begin position="1"/>
        <end position="430"/>
    </location>
</feature>
<feature type="active site" description="Proton acceptor" evidence="1">
    <location>
        <position position="13"/>
    </location>
</feature>
<feature type="active site" description="Proton donor" evidence="1">
    <location>
        <position position="41"/>
    </location>
</feature>
<feature type="binding site" evidence="1">
    <location>
        <begin position="12"/>
        <end position="18"/>
    </location>
    <ligand>
        <name>GTP</name>
        <dbReference type="ChEBI" id="CHEBI:37565"/>
    </ligand>
</feature>
<feature type="binding site" description="in other chain" evidence="1">
    <location>
        <begin position="13"/>
        <end position="16"/>
    </location>
    <ligand>
        <name>IMP</name>
        <dbReference type="ChEBI" id="CHEBI:58053"/>
        <note>ligand shared between dimeric partners</note>
    </ligand>
</feature>
<feature type="binding site" evidence="1">
    <location>
        <position position="13"/>
    </location>
    <ligand>
        <name>Mg(2+)</name>
        <dbReference type="ChEBI" id="CHEBI:18420"/>
    </ligand>
</feature>
<feature type="binding site" description="in other chain" evidence="1">
    <location>
        <begin position="38"/>
        <end position="41"/>
    </location>
    <ligand>
        <name>IMP</name>
        <dbReference type="ChEBI" id="CHEBI:58053"/>
        <note>ligand shared between dimeric partners</note>
    </ligand>
</feature>
<feature type="binding site" evidence="1">
    <location>
        <begin position="40"/>
        <end position="42"/>
    </location>
    <ligand>
        <name>GTP</name>
        <dbReference type="ChEBI" id="CHEBI:37565"/>
    </ligand>
</feature>
<feature type="binding site" evidence="1">
    <location>
        <position position="40"/>
    </location>
    <ligand>
        <name>Mg(2+)</name>
        <dbReference type="ChEBI" id="CHEBI:18420"/>
    </ligand>
</feature>
<feature type="binding site" description="in other chain" evidence="1">
    <location>
        <position position="128"/>
    </location>
    <ligand>
        <name>IMP</name>
        <dbReference type="ChEBI" id="CHEBI:58053"/>
        <note>ligand shared between dimeric partners</note>
    </ligand>
</feature>
<feature type="binding site" evidence="1">
    <location>
        <position position="142"/>
    </location>
    <ligand>
        <name>IMP</name>
        <dbReference type="ChEBI" id="CHEBI:58053"/>
        <note>ligand shared between dimeric partners</note>
    </ligand>
</feature>
<feature type="binding site" description="in other chain" evidence="1">
    <location>
        <position position="223"/>
    </location>
    <ligand>
        <name>IMP</name>
        <dbReference type="ChEBI" id="CHEBI:58053"/>
        <note>ligand shared between dimeric partners</note>
    </ligand>
</feature>
<feature type="binding site" description="in other chain" evidence="1">
    <location>
        <position position="238"/>
    </location>
    <ligand>
        <name>IMP</name>
        <dbReference type="ChEBI" id="CHEBI:58053"/>
        <note>ligand shared between dimeric partners</note>
    </ligand>
</feature>
<feature type="binding site" evidence="1">
    <location>
        <begin position="298"/>
        <end position="304"/>
    </location>
    <ligand>
        <name>substrate</name>
    </ligand>
</feature>
<feature type="binding site" description="in other chain" evidence="1">
    <location>
        <position position="302"/>
    </location>
    <ligand>
        <name>IMP</name>
        <dbReference type="ChEBI" id="CHEBI:58053"/>
        <note>ligand shared between dimeric partners</note>
    </ligand>
</feature>
<feature type="binding site" evidence="1">
    <location>
        <position position="304"/>
    </location>
    <ligand>
        <name>GTP</name>
        <dbReference type="ChEBI" id="CHEBI:37565"/>
    </ligand>
</feature>
<feature type="binding site" evidence="1">
    <location>
        <begin position="330"/>
        <end position="332"/>
    </location>
    <ligand>
        <name>GTP</name>
        <dbReference type="ChEBI" id="CHEBI:37565"/>
    </ligand>
</feature>
<feature type="binding site" evidence="1">
    <location>
        <begin position="412"/>
        <end position="414"/>
    </location>
    <ligand>
        <name>GTP</name>
        <dbReference type="ChEBI" id="CHEBI:37565"/>
    </ligand>
</feature>